<accession>A6NGE4</accession>
<accession>B3KXX1</accession>
<protein>
    <recommendedName>
        <fullName>DDB1- and CUL4-associated factor 8-like protein 1</fullName>
    </recommendedName>
    <alternativeName>
        <fullName>WD repeat-containing protein 42B</fullName>
    </alternativeName>
</protein>
<keyword id="KW-1267">Proteomics identification</keyword>
<keyword id="KW-1185">Reference proteome</keyword>
<keyword id="KW-0677">Repeat</keyword>
<keyword id="KW-0853">WD repeat</keyword>
<comment type="similarity">
    <text evidence="2">Belongs to the WD repeat DCAF8 family.</text>
</comment>
<sequence>MSHQEGSTGGLPDLVTESLFSSPEEQSGVAAVTAASSDIEMAATEPSTGDGGDTRDGGFLNDASTENQNTDSESSSEDVELESMGEGLFGYPLVGEETEREEEEEEMEEEGEEEEQPRMCPRCGGTNHDQCLLDEDQALEEWISSETSALPRSRWQVLTALRQRQLGSSARFVYEACGARTFVQRFRLQYLLGSHAGSVSTIHFNQRGTRLASSGDDLRVIVWDWVRQKPVLNFESGHDINVIQAKFFPNCGDSTLAMCGHDGQVRVAELINASYCENTKRVAKHRGPAHELALEPDSPYKFLTSGEDAVVFTIDLRQDRPASKVVVTRENDKKVGLYTISMNPANIYQFAVGGHDQFVRIYDQRRIDKKENNGVLKKFTPHHLVYCDFPTNITCVVYSHDGTELLASYNDEDIYLFNSSLSDGAQYVKRYKGHRNNDTIKCVNFYGPRSEFVVSGSDCGHVFFWEKSSSQIIQFMEGDRGDIVNCLEPHPYLPVLATSGLDQHVRIWTPTAKTATELTGLKDVIKKNKQERDEDNLNYTDSFDNRMLRFFVRHLLQRAHQPGWRDHGAEFPDEEELDESSSTSDTSEEEGQDRVQCIPS</sequence>
<gene>
    <name type="primary">DCAF8L1</name>
    <name type="synonym">WDR42B</name>
</gene>
<proteinExistence type="evidence at protein level"/>
<name>DC8L1_HUMAN</name>
<reference key="1">
    <citation type="journal article" date="2004" name="Nat. Genet.">
        <title>Complete sequencing and characterization of 21,243 full-length human cDNAs.</title>
        <authorList>
            <person name="Ota T."/>
            <person name="Suzuki Y."/>
            <person name="Nishikawa T."/>
            <person name="Otsuki T."/>
            <person name="Sugiyama T."/>
            <person name="Irie R."/>
            <person name="Wakamatsu A."/>
            <person name="Hayashi K."/>
            <person name="Sato H."/>
            <person name="Nagai K."/>
            <person name="Kimura K."/>
            <person name="Makita H."/>
            <person name="Sekine M."/>
            <person name="Obayashi M."/>
            <person name="Nishi T."/>
            <person name="Shibahara T."/>
            <person name="Tanaka T."/>
            <person name="Ishii S."/>
            <person name="Yamamoto J."/>
            <person name="Saito K."/>
            <person name="Kawai Y."/>
            <person name="Isono Y."/>
            <person name="Nakamura Y."/>
            <person name="Nagahari K."/>
            <person name="Murakami K."/>
            <person name="Yasuda T."/>
            <person name="Iwayanagi T."/>
            <person name="Wagatsuma M."/>
            <person name="Shiratori A."/>
            <person name="Sudo H."/>
            <person name="Hosoiri T."/>
            <person name="Kaku Y."/>
            <person name="Kodaira H."/>
            <person name="Kondo H."/>
            <person name="Sugawara M."/>
            <person name="Takahashi M."/>
            <person name="Kanda K."/>
            <person name="Yokoi T."/>
            <person name="Furuya T."/>
            <person name="Kikkawa E."/>
            <person name="Omura Y."/>
            <person name="Abe K."/>
            <person name="Kamihara K."/>
            <person name="Katsuta N."/>
            <person name="Sato K."/>
            <person name="Tanikawa M."/>
            <person name="Yamazaki M."/>
            <person name="Ninomiya K."/>
            <person name="Ishibashi T."/>
            <person name="Yamashita H."/>
            <person name="Murakawa K."/>
            <person name="Fujimori K."/>
            <person name="Tanai H."/>
            <person name="Kimata M."/>
            <person name="Watanabe M."/>
            <person name="Hiraoka S."/>
            <person name="Chiba Y."/>
            <person name="Ishida S."/>
            <person name="Ono Y."/>
            <person name="Takiguchi S."/>
            <person name="Watanabe S."/>
            <person name="Yosida M."/>
            <person name="Hotuta T."/>
            <person name="Kusano J."/>
            <person name="Kanehori K."/>
            <person name="Takahashi-Fujii A."/>
            <person name="Hara H."/>
            <person name="Tanase T.-O."/>
            <person name="Nomura Y."/>
            <person name="Togiya S."/>
            <person name="Komai F."/>
            <person name="Hara R."/>
            <person name="Takeuchi K."/>
            <person name="Arita M."/>
            <person name="Imose N."/>
            <person name="Musashino K."/>
            <person name="Yuuki H."/>
            <person name="Oshima A."/>
            <person name="Sasaki N."/>
            <person name="Aotsuka S."/>
            <person name="Yoshikawa Y."/>
            <person name="Matsunawa H."/>
            <person name="Ichihara T."/>
            <person name="Shiohata N."/>
            <person name="Sano S."/>
            <person name="Moriya S."/>
            <person name="Momiyama H."/>
            <person name="Satoh N."/>
            <person name="Takami S."/>
            <person name="Terashima Y."/>
            <person name="Suzuki O."/>
            <person name="Nakagawa S."/>
            <person name="Senoh A."/>
            <person name="Mizoguchi H."/>
            <person name="Goto Y."/>
            <person name="Shimizu F."/>
            <person name="Wakebe H."/>
            <person name="Hishigaki H."/>
            <person name="Watanabe T."/>
            <person name="Sugiyama A."/>
            <person name="Takemoto M."/>
            <person name="Kawakami B."/>
            <person name="Yamazaki M."/>
            <person name="Watanabe K."/>
            <person name="Kumagai A."/>
            <person name="Itakura S."/>
            <person name="Fukuzumi Y."/>
            <person name="Fujimori Y."/>
            <person name="Komiyama M."/>
            <person name="Tashiro H."/>
            <person name="Tanigami A."/>
            <person name="Fujiwara T."/>
            <person name="Ono T."/>
            <person name="Yamada K."/>
            <person name="Fujii Y."/>
            <person name="Ozaki K."/>
            <person name="Hirao M."/>
            <person name="Ohmori Y."/>
            <person name="Kawabata A."/>
            <person name="Hikiji T."/>
            <person name="Kobatake N."/>
            <person name="Inagaki H."/>
            <person name="Ikema Y."/>
            <person name="Okamoto S."/>
            <person name="Okitani R."/>
            <person name="Kawakami T."/>
            <person name="Noguchi S."/>
            <person name="Itoh T."/>
            <person name="Shigeta K."/>
            <person name="Senba T."/>
            <person name="Matsumura K."/>
            <person name="Nakajima Y."/>
            <person name="Mizuno T."/>
            <person name="Morinaga M."/>
            <person name="Sasaki M."/>
            <person name="Togashi T."/>
            <person name="Oyama M."/>
            <person name="Hata H."/>
            <person name="Watanabe M."/>
            <person name="Komatsu T."/>
            <person name="Mizushima-Sugano J."/>
            <person name="Satoh T."/>
            <person name="Shirai Y."/>
            <person name="Takahashi Y."/>
            <person name="Nakagawa K."/>
            <person name="Okumura K."/>
            <person name="Nagase T."/>
            <person name="Nomura N."/>
            <person name="Kikuchi H."/>
            <person name="Masuho Y."/>
            <person name="Yamashita R."/>
            <person name="Nakai K."/>
            <person name="Yada T."/>
            <person name="Nakamura Y."/>
            <person name="Ohara O."/>
            <person name="Isogai T."/>
            <person name="Sugano S."/>
        </authorList>
    </citation>
    <scope>NUCLEOTIDE SEQUENCE [LARGE SCALE MRNA]</scope>
    <source>
        <tissue>Testis</tissue>
    </source>
</reference>
<reference key="2">
    <citation type="journal article" date="2005" name="Nature">
        <title>The DNA sequence of the human X chromosome.</title>
        <authorList>
            <person name="Ross M.T."/>
            <person name="Grafham D.V."/>
            <person name="Coffey A.J."/>
            <person name="Scherer S."/>
            <person name="McLay K."/>
            <person name="Muzny D."/>
            <person name="Platzer M."/>
            <person name="Howell G.R."/>
            <person name="Burrows C."/>
            <person name="Bird C.P."/>
            <person name="Frankish A."/>
            <person name="Lovell F.L."/>
            <person name="Howe K.L."/>
            <person name="Ashurst J.L."/>
            <person name="Fulton R.S."/>
            <person name="Sudbrak R."/>
            <person name="Wen G."/>
            <person name="Jones M.C."/>
            <person name="Hurles M.E."/>
            <person name="Andrews T.D."/>
            <person name="Scott C.E."/>
            <person name="Searle S."/>
            <person name="Ramser J."/>
            <person name="Whittaker A."/>
            <person name="Deadman R."/>
            <person name="Carter N.P."/>
            <person name="Hunt S.E."/>
            <person name="Chen R."/>
            <person name="Cree A."/>
            <person name="Gunaratne P."/>
            <person name="Havlak P."/>
            <person name="Hodgson A."/>
            <person name="Metzker M.L."/>
            <person name="Richards S."/>
            <person name="Scott G."/>
            <person name="Steffen D."/>
            <person name="Sodergren E."/>
            <person name="Wheeler D.A."/>
            <person name="Worley K.C."/>
            <person name="Ainscough R."/>
            <person name="Ambrose K.D."/>
            <person name="Ansari-Lari M.A."/>
            <person name="Aradhya S."/>
            <person name="Ashwell R.I."/>
            <person name="Babbage A.K."/>
            <person name="Bagguley C.L."/>
            <person name="Ballabio A."/>
            <person name="Banerjee R."/>
            <person name="Barker G.E."/>
            <person name="Barlow K.F."/>
            <person name="Barrett I.P."/>
            <person name="Bates K.N."/>
            <person name="Beare D.M."/>
            <person name="Beasley H."/>
            <person name="Beasley O."/>
            <person name="Beck A."/>
            <person name="Bethel G."/>
            <person name="Blechschmidt K."/>
            <person name="Brady N."/>
            <person name="Bray-Allen S."/>
            <person name="Bridgeman A.M."/>
            <person name="Brown A.J."/>
            <person name="Brown M.J."/>
            <person name="Bonnin D."/>
            <person name="Bruford E.A."/>
            <person name="Buhay C."/>
            <person name="Burch P."/>
            <person name="Burford D."/>
            <person name="Burgess J."/>
            <person name="Burrill W."/>
            <person name="Burton J."/>
            <person name="Bye J.M."/>
            <person name="Carder C."/>
            <person name="Carrel L."/>
            <person name="Chako J."/>
            <person name="Chapman J.C."/>
            <person name="Chavez D."/>
            <person name="Chen E."/>
            <person name="Chen G."/>
            <person name="Chen Y."/>
            <person name="Chen Z."/>
            <person name="Chinault C."/>
            <person name="Ciccodicola A."/>
            <person name="Clark S.Y."/>
            <person name="Clarke G."/>
            <person name="Clee C.M."/>
            <person name="Clegg S."/>
            <person name="Clerc-Blankenburg K."/>
            <person name="Clifford K."/>
            <person name="Cobley V."/>
            <person name="Cole C.G."/>
            <person name="Conquer J.S."/>
            <person name="Corby N."/>
            <person name="Connor R.E."/>
            <person name="David R."/>
            <person name="Davies J."/>
            <person name="Davis C."/>
            <person name="Davis J."/>
            <person name="Delgado O."/>
            <person name="Deshazo D."/>
            <person name="Dhami P."/>
            <person name="Ding Y."/>
            <person name="Dinh H."/>
            <person name="Dodsworth S."/>
            <person name="Draper H."/>
            <person name="Dugan-Rocha S."/>
            <person name="Dunham A."/>
            <person name="Dunn M."/>
            <person name="Durbin K.J."/>
            <person name="Dutta I."/>
            <person name="Eades T."/>
            <person name="Ellwood M."/>
            <person name="Emery-Cohen A."/>
            <person name="Errington H."/>
            <person name="Evans K.L."/>
            <person name="Faulkner L."/>
            <person name="Francis F."/>
            <person name="Frankland J."/>
            <person name="Fraser A.E."/>
            <person name="Galgoczy P."/>
            <person name="Gilbert J."/>
            <person name="Gill R."/>
            <person name="Gloeckner G."/>
            <person name="Gregory S.G."/>
            <person name="Gribble S."/>
            <person name="Griffiths C."/>
            <person name="Grocock R."/>
            <person name="Gu Y."/>
            <person name="Gwilliam R."/>
            <person name="Hamilton C."/>
            <person name="Hart E.A."/>
            <person name="Hawes A."/>
            <person name="Heath P.D."/>
            <person name="Heitmann K."/>
            <person name="Hennig S."/>
            <person name="Hernandez J."/>
            <person name="Hinzmann B."/>
            <person name="Ho S."/>
            <person name="Hoffs M."/>
            <person name="Howden P.J."/>
            <person name="Huckle E.J."/>
            <person name="Hume J."/>
            <person name="Hunt P.J."/>
            <person name="Hunt A.R."/>
            <person name="Isherwood J."/>
            <person name="Jacob L."/>
            <person name="Johnson D."/>
            <person name="Jones S."/>
            <person name="de Jong P.J."/>
            <person name="Joseph S.S."/>
            <person name="Keenan S."/>
            <person name="Kelly S."/>
            <person name="Kershaw J.K."/>
            <person name="Khan Z."/>
            <person name="Kioschis P."/>
            <person name="Klages S."/>
            <person name="Knights A.J."/>
            <person name="Kosiura A."/>
            <person name="Kovar-Smith C."/>
            <person name="Laird G.K."/>
            <person name="Langford C."/>
            <person name="Lawlor S."/>
            <person name="Leversha M."/>
            <person name="Lewis L."/>
            <person name="Liu W."/>
            <person name="Lloyd C."/>
            <person name="Lloyd D.M."/>
            <person name="Loulseged H."/>
            <person name="Loveland J.E."/>
            <person name="Lovell J.D."/>
            <person name="Lozado R."/>
            <person name="Lu J."/>
            <person name="Lyne R."/>
            <person name="Ma J."/>
            <person name="Maheshwari M."/>
            <person name="Matthews L.H."/>
            <person name="McDowall J."/>
            <person name="McLaren S."/>
            <person name="McMurray A."/>
            <person name="Meidl P."/>
            <person name="Meitinger T."/>
            <person name="Milne S."/>
            <person name="Miner G."/>
            <person name="Mistry S.L."/>
            <person name="Morgan M."/>
            <person name="Morris S."/>
            <person name="Mueller I."/>
            <person name="Mullikin J.C."/>
            <person name="Nguyen N."/>
            <person name="Nordsiek G."/>
            <person name="Nyakatura G."/>
            <person name="O'dell C.N."/>
            <person name="Okwuonu G."/>
            <person name="Palmer S."/>
            <person name="Pandian R."/>
            <person name="Parker D."/>
            <person name="Parrish J."/>
            <person name="Pasternak S."/>
            <person name="Patel D."/>
            <person name="Pearce A.V."/>
            <person name="Pearson D.M."/>
            <person name="Pelan S.E."/>
            <person name="Perez L."/>
            <person name="Porter K.M."/>
            <person name="Ramsey Y."/>
            <person name="Reichwald K."/>
            <person name="Rhodes S."/>
            <person name="Ridler K.A."/>
            <person name="Schlessinger D."/>
            <person name="Schueler M.G."/>
            <person name="Sehra H.K."/>
            <person name="Shaw-Smith C."/>
            <person name="Shen H."/>
            <person name="Sheridan E.M."/>
            <person name="Shownkeen R."/>
            <person name="Skuce C.D."/>
            <person name="Smith M.L."/>
            <person name="Sotheran E.C."/>
            <person name="Steingruber H.E."/>
            <person name="Steward C.A."/>
            <person name="Storey R."/>
            <person name="Swann R.M."/>
            <person name="Swarbreck D."/>
            <person name="Tabor P.E."/>
            <person name="Taudien S."/>
            <person name="Taylor T."/>
            <person name="Teague B."/>
            <person name="Thomas K."/>
            <person name="Thorpe A."/>
            <person name="Timms K."/>
            <person name="Tracey A."/>
            <person name="Trevanion S."/>
            <person name="Tromans A.C."/>
            <person name="d'Urso M."/>
            <person name="Verduzco D."/>
            <person name="Villasana D."/>
            <person name="Waldron L."/>
            <person name="Wall M."/>
            <person name="Wang Q."/>
            <person name="Warren J."/>
            <person name="Warry G.L."/>
            <person name="Wei X."/>
            <person name="West A."/>
            <person name="Whitehead S.L."/>
            <person name="Whiteley M.N."/>
            <person name="Wilkinson J.E."/>
            <person name="Willey D.L."/>
            <person name="Williams G."/>
            <person name="Williams L."/>
            <person name="Williamson A."/>
            <person name="Williamson H."/>
            <person name="Wilming L."/>
            <person name="Woodmansey R.L."/>
            <person name="Wray P.W."/>
            <person name="Yen J."/>
            <person name="Zhang J."/>
            <person name="Zhou J."/>
            <person name="Zoghbi H."/>
            <person name="Zorilla S."/>
            <person name="Buck D."/>
            <person name="Reinhardt R."/>
            <person name="Poustka A."/>
            <person name="Rosenthal A."/>
            <person name="Lehrach H."/>
            <person name="Meindl A."/>
            <person name="Minx P.J."/>
            <person name="Hillier L.W."/>
            <person name="Willard H.F."/>
            <person name="Wilson R.K."/>
            <person name="Waterston R.H."/>
            <person name="Rice C.M."/>
            <person name="Vaudin M."/>
            <person name="Coulson A."/>
            <person name="Nelson D.L."/>
            <person name="Weinstock G."/>
            <person name="Sulston J.E."/>
            <person name="Durbin R.M."/>
            <person name="Hubbard T."/>
            <person name="Gibbs R.A."/>
            <person name="Beck S."/>
            <person name="Rogers J."/>
            <person name="Bentley D.R."/>
        </authorList>
    </citation>
    <scope>NUCLEOTIDE SEQUENCE [LARGE SCALE GENOMIC DNA]</scope>
</reference>
<reference key="3">
    <citation type="submission" date="2005-07" db="EMBL/GenBank/DDBJ databases">
        <authorList>
            <person name="Mural R.J."/>
            <person name="Istrail S."/>
            <person name="Sutton G.G."/>
            <person name="Florea L."/>
            <person name="Halpern A.L."/>
            <person name="Mobarry C.M."/>
            <person name="Lippert R."/>
            <person name="Walenz B."/>
            <person name="Shatkay H."/>
            <person name="Dew I."/>
            <person name="Miller J.R."/>
            <person name="Flanigan M.J."/>
            <person name="Edwards N.J."/>
            <person name="Bolanos R."/>
            <person name="Fasulo D."/>
            <person name="Halldorsson B.V."/>
            <person name="Hannenhalli S."/>
            <person name="Turner R."/>
            <person name="Yooseph S."/>
            <person name="Lu F."/>
            <person name="Nusskern D.R."/>
            <person name="Shue B.C."/>
            <person name="Zheng X.H."/>
            <person name="Zhong F."/>
            <person name="Delcher A.L."/>
            <person name="Huson D.H."/>
            <person name="Kravitz S.A."/>
            <person name="Mouchard L."/>
            <person name="Reinert K."/>
            <person name="Remington K.A."/>
            <person name="Clark A.G."/>
            <person name="Waterman M.S."/>
            <person name="Eichler E.E."/>
            <person name="Adams M.D."/>
            <person name="Hunkapiller M.W."/>
            <person name="Myers E.W."/>
            <person name="Venter J.C."/>
        </authorList>
    </citation>
    <scope>NUCLEOTIDE SEQUENCE [LARGE SCALE GENOMIC DNA]</scope>
</reference>
<organism>
    <name type="scientific">Homo sapiens</name>
    <name type="common">Human</name>
    <dbReference type="NCBI Taxonomy" id="9606"/>
    <lineage>
        <taxon>Eukaryota</taxon>
        <taxon>Metazoa</taxon>
        <taxon>Chordata</taxon>
        <taxon>Craniata</taxon>
        <taxon>Vertebrata</taxon>
        <taxon>Euteleostomi</taxon>
        <taxon>Mammalia</taxon>
        <taxon>Eutheria</taxon>
        <taxon>Euarchontoglires</taxon>
        <taxon>Primates</taxon>
        <taxon>Haplorrhini</taxon>
        <taxon>Catarrhini</taxon>
        <taxon>Hominidae</taxon>
        <taxon>Homo</taxon>
    </lineage>
</organism>
<dbReference type="EMBL" id="AK128123">
    <property type="protein sequence ID" value="BAG54633.1"/>
    <property type="molecule type" value="mRNA"/>
</dbReference>
<dbReference type="EMBL" id="AC004553">
    <property type="status" value="NOT_ANNOTATED_CDS"/>
    <property type="molecule type" value="Genomic_DNA"/>
</dbReference>
<dbReference type="EMBL" id="CH471074">
    <property type="protein sequence ID" value="EAW99044.1"/>
    <property type="molecule type" value="Genomic_DNA"/>
</dbReference>
<dbReference type="CCDS" id="CCDS35222.1"/>
<dbReference type="RefSeq" id="NP_001017930.1">
    <property type="nucleotide sequence ID" value="NM_001017930.2"/>
</dbReference>
<dbReference type="SMR" id="A6NGE4"/>
<dbReference type="BioGRID" id="126567">
    <property type="interactions" value="2"/>
</dbReference>
<dbReference type="FunCoup" id="A6NGE4">
    <property type="interactions" value="60"/>
</dbReference>
<dbReference type="IntAct" id="A6NGE4">
    <property type="interactions" value="1"/>
</dbReference>
<dbReference type="STRING" id="9606.ENSP00000405222"/>
<dbReference type="GlyGen" id="A6NGE4">
    <property type="glycosylation" value="1 site"/>
</dbReference>
<dbReference type="iPTMnet" id="A6NGE4"/>
<dbReference type="PhosphoSitePlus" id="A6NGE4"/>
<dbReference type="BioMuta" id="DCAF8L1"/>
<dbReference type="jPOST" id="A6NGE4"/>
<dbReference type="MassIVE" id="A6NGE4"/>
<dbReference type="PaxDb" id="9606-ENSP00000405222"/>
<dbReference type="PeptideAtlas" id="A6NGE4"/>
<dbReference type="ProteomicsDB" id="1119"/>
<dbReference type="Antibodypedia" id="50600">
    <property type="antibodies" value="5 antibodies from 5 providers"/>
</dbReference>
<dbReference type="DNASU" id="139425"/>
<dbReference type="Ensembl" id="ENST00000441525.4">
    <property type="protein sequence ID" value="ENSP00000405222.1"/>
    <property type="gene ID" value="ENSG00000226372.4"/>
</dbReference>
<dbReference type="GeneID" id="139425"/>
<dbReference type="KEGG" id="hsa:139425"/>
<dbReference type="MANE-Select" id="ENST00000441525.4">
    <property type="protein sequence ID" value="ENSP00000405222.1"/>
    <property type="RefSeq nucleotide sequence ID" value="NM_001017930.2"/>
    <property type="RefSeq protein sequence ID" value="NP_001017930.1"/>
</dbReference>
<dbReference type="UCSC" id="uc004dbx.2">
    <property type="organism name" value="human"/>
</dbReference>
<dbReference type="AGR" id="HGNC:31810"/>
<dbReference type="CTD" id="139425"/>
<dbReference type="DisGeNET" id="139425"/>
<dbReference type="GeneCards" id="DCAF8L1"/>
<dbReference type="HGNC" id="HGNC:31810">
    <property type="gene designation" value="DCAF8L1"/>
</dbReference>
<dbReference type="HPA" id="ENSG00000226372">
    <property type="expression patterns" value="Not detected"/>
</dbReference>
<dbReference type="neXtProt" id="NX_A6NGE4"/>
<dbReference type="OpenTargets" id="ENSG00000226372"/>
<dbReference type="PharmGKB" id="PA165756552"/>
<dbReference type="VEuPathDB" id="HostDB:ENSG00000226372"/>
<dbReference type="eggNOG" id="KOG1334">
    <property type="taxonomic scope" value="Eukaryota"/>
</dbReference>
<dbReference type="GeneTree" id="ENSGT00950000182900"/>
<dbReference type="HOGENOM" id="CLU_012381_4_1_1"/>
<dbReference type="InParanoid" id="A6NGE4"/>
<dbReference type="OMA" id="KGHRNND"/>
<dbReference type="OrthoDB" id="4869960at2759"/>
<dbReference type="PAN-GO" id="A6NGE4">
    <property type="GO annotations" value="2 GO annotations based on evolutionary models"/>
</dbReference>
<dbReference type="PhylomeDB" id="A6NGE4"/>
<dbReference type="TreeFam" id="TF326071"/>
<dbReference type="PathwayCommons" id="A6NGE4"/>
<dbReference type="SignaLink" id="A6NGE4"/>
<dbReference type="BioGRID-ORCS" id="139425">
    <property type="hits" value="13 hits in 796 CRISPR screens"/>
</dbReference>
<dbReference type="GenomeRNAi" id="139425"/>
<dbReference type="Pharos" id="A6NGE4">
    <property type="development level" value="Tdark"/>
</dbReference>
<dbReference type="PRO" id="PR:A6NGE4"/>
<dbReference type="Proteomes" id="UP000005640">
    <property type="component" value="Chromosome X"/>
</dbReference>
<dbReference type="RNAct" id="A6NGE4">
    <property type="molecule type" value="protein"/>
</dbReference>
<dbReference type="Bgee" id="ENSG00000226372">
    <property type="expression patterns" value="Expressed in primordial germ cell in gonad and 4 other cell types or tissues"/>
</dbReference>
<dbReference type="GO" id="GO:0080008">
    <property type="term" value="C:Cul4-RING E3 ubiquitin ligase complex"/>
    <property type="evidence" value="ECO:0000318"/>
    <property type="project" value="GO_Central"/>
</dbReference>
<dbReference type="GO" id="GO:0005737">
    <property type="term" value="C:cytoplasm"/>
    <property type="evidence" value="ECO:0000318"/>
    <property type="project" value="GO_Central"/>
</dbReference>
<dbReference type="FunFam" id="2.130.10.10:FF:000144">
    <property type="entry name" value="DDB1- and CUL4-associated factor 8"/>
    <property type="match status" value="1"/>
</dbReference>
<dbReference type="Gene3D" id="2.130.10.10">
    <property type="entry name" value="YVTN repeat-like/Quinoprotein amine dehydrogenase"/>
    <property type="match status" value="1"/>
</dbReference>
<dbReference type="InterPro" id="IPR045151">
    <property type="entry name" value="DCAF8"/>
</dbReference>
<dbReference type="InterPro" id="IPR015943">
    <property type="entry name" value="WD40/YVTN_repeat-like_dom_sf"/>
</dbReference>
<dbReference type="InterPro" id="IPR036322">
    <property type="entry name" value="WD40_repeat_dom_sf"/>
</dbReference>
<dbReference type="InterPro" id="IPR001680">
    <property type="entry name" value="WD40_rpt"/>
</dbReference>
<dbReference type="PANTHER" id="PTHR15574:SF29">
    <property type="entry name" value="DDB1- AND CUL4-ASSOCIATED FACTOR 8-LIKE PROTEIN 1"/>
    <property type="match status" value="1"/>
</dbReference>
<dbReference type="PANTHER" id="PTHR15574">
    <property type="entry name" value="WD REPEAT DOMAIN-CONTAINING FAMILY"/>
    <property type="match status" value="1"/>
</dbReference>
<dbReference type="Pfam" id="PF00400">
    <property type="entry name" value="WD40"/>
    <property type="match status" value="3"/>
</dbReference>
<dbReference type="SMART" id="SM00320">
    <property type="entry name" value="WD40"/>
    <property type="match status" value="7"/>
</dbReference>
<dbReference type="SUPFAM" id="SSF50978">
    <property type="entry name" value="WD40 repeat-like"/>
    <property type="match status" value="1"/>
</dbReference>
<dbReference type="PROSITE" id="PS50082">
    <property type="entry name" value="WD_REPEATS_2"/>
    <property type="match status" value="1"/>
</dbReference>
<dbReference type="PROSITE" id="PS50294">
    <property type="entry name" value="WD_REPEATS_REGION"/>
    <property type="match status" value="1"/>
</dbReference>
<evidence type="ECO:0000256" key="1">
    <source>
        <dbReference type="SAM" id="MobiDB-lite"/>
    </source>
</evidence>
<evidence type="ECO:0000305" key="2"/>
<feature type="chain" id="PRO_0000314820" description="DDB1- and CUL4-associated factor 8-like protein 1">
    <location>
        <begin position="1"/>
        <end position="600"/>
    </location>
</feature>
<feature type="repeat" description="WD 1">
    <location>
        <begin position="194"/>
        <end position="233"/>
    </location>
</feature>
<feature type="repeat" description="WD 2">
    <location>
        <begin position="237"/>
        <end position="278"/>
    </location>
</feature>
<feature type="repeat" description="WD 3">
    <location>
        <begin position="284"/>
        <end position="324"/>
    </location>
</feature>
<feature type="repeat" description="WD 4">
    <location>
        <begin position="332"/>
        <end position="372"/>
    </location>
</feature>
<feature type="repeat" description="WD 5">
    <location>
        <begin position="388"/>
        <end position="427"/>
    </location>
</feature>
<feature type="repeat" description="WD 6">
    <location>
        <begin position="435"/>
        <end position="475"/>
    </location>
</feature>
<feature type="repeat" description="WD 7">
    <location>
        <begin position="479"/>
        <end position="518"/>
    </location>
</feature>
<feature type="region of interest" description="Disordered" evidence="1">
    <location>
        <begin position="1"/>
        <end position="122"/>
    </location>
</feature>
<feature type="region of interest" description="Disordered" evidence="1">
    <location>
        <begin position="562"/>
        <end position="600"/>
    </location>
</feature>
<feature type="compositionally biased region" description="Acidic residues" evidence="1">
    <location>
        <begin position="74"/>
        <end position="83"/>
    </location>
</feature>
<feature type="compositionally biased region" description="Acidic residues" evidence="1">
    <location>
        <begin position="96"/>
        <end position="115"/>
    </location>
</feature>
<feature type="sequence variant" id="VAR_038060" description="In dbSNP:rs12388557.">
    <original>R</original>
    <variation>W</variation>
    <location>
        <position position="549"/>
    </location>
</feature>